<dbReference type="EC" id="2.7.7.6" evidence="1"/>
<dbReference type="EMBL" id="CP000448">
    <property type="protein sequence ID" value="ABI69632.1"/>
    <property type="molecule type" value="Genomic_DNA"/>
</dbReference>
<dbReference type="RefSeq" id="WP_011641716.1">
    <property type="nucleotide sequence ID" value="NC_008346.1"/>
</dbReference>
<dbReference type="SMR" id="Q0AUH2"/>
<dbReference type="STRING" id="335541.Swol_2341"/>
<dbReference type="KEGG" id="swo:Swol_2341"/>
<dbReference type="eggNOG" id="COG0085">
    <property type="taxonomic scope" value="Bacteria"/>
</dbReference>
<dbReference type="HOGENOM" id="CLU_000524_4_1_9"/>
<dbReference type="OrthoDB" id="9803954at2"/>
<dbReference type="Proteomes" id="UP000001968">
    <property type="component" value="Chromosome"/>
</dbReference>
<dbReference type="GO" id="GO:0000428">
    <property type="term" value="C:DNA-directed RNA polymerase complex"/>
    <property type="evidence" value="ECO:0007669"/>
    <property type="project" value="UniProtKB-KW"/>
</dbReference>
<dbReference type="GO" id="GO:0003677">
    <property type="term" value="F:DNA binding"/>
    <property type="evidence" value="ECO:0007669"/>
    <property type="project" value="UniProtKB-UniRule"/>
</dbReference>
<dbReference type="GO" id="GO:0003899">
    <property type="term" value="F:DNA-directed RNA polymerase activity"/>
    <property type="evidence" value="ECO:0007669"/>
    <property type="project" value="UniProtKB-UniRule"/>
</dbReference>
<dbReference type="GO" id="GO:0032549">
    <property type="term" value="F:ribonucleoside binding"/>
    <property type="evidence" value="ECO:0007669"/>
    <property type="project" value="InterPro"/>
</dbReference>
<dbReference type="GO" id="GO:0006351">
    <property type="term" value="P:DNA-templated transcription"/>
    <property type="evidence" value="ECO:0007669"/>
    <property type="project" value="UniProtKB-UniRule"/>
</dbReference>
<dbReference type="CDD" id="cd00653">
    <property type="entry name" value="RNA_pol_B_RPB2"/>
    <property type="match status" value="1"/>
</dbReference>
<dbReference type="FunFam" id="3.90.1800.10:FF:000001">
    <property type="entry name" value="DNA-directed RNA polymerase subunit beta"/>
    <property type="match status" value="1"/>
</dbReference>
<dbReference type="Gene3D" id="2.40.50.100">
    <property type="match status" value="1"/>
</dbReference>
<dbReference type="Gene3D" id="2.40.50.150">
    <property type="match status" value="1"/>
</dbReference>
<dbReference type="Gene3D" id="3.90.1100.10">
    <property type="match status" value="1"/>
</dbReference>
<dbReference type="Gene3D" id="2.30.150.10">
    <property type="entry name" value="DNA-directed RNA polymerase, beta subunit, external 1 domain"/>
    <property type="match status" value="1"/>
</dbReference>
<dbReference type="Gene3D" id="2.40.270.10">
    <property type="entry name" value="DNA-directed RNA polymerase, subunit 2, domain 6"/>
    <property type="match status" value="2"/>
</dbReference>
<dbReference type="Gene3D" id="3.90.1800.10">
    <property type="entry name" value="RNA polymerase alpha subunit dimerisation domain"/>
    <property type="match status" value="1"/>
</dbReference>
<dbReference type="Gene3D" id="3.90.1110.10">
    <property type="entry name" value="RNA polymerase Rpb2, domain 2"/>
    <property type="match status" value="1"/>
</dbReference>
<dbReference type="HAMAP" id="MF_01321">
    <property type="entry name" value="RNApol_bact_RpoB"/>
    <property type="match status" value="1"/>
</dbReference>
<dbReference type="InterPro" id="IPR042107">
    <property type="entry name" value="DNA-dir_RNA_pol_bsu_ext_1_sf"/>
</dbReference>
<dbReference type="InterPro" id="IPR019462">
    <property type="entry name" value="DNA-dir_RNA_pol_bsu_external_1"/>
</dbReference>
<dbReference type="InterPro" id="IPR015712">
    <property type="entry name" value="DNA-dir_RNA_pol_su2"/>
</dbReference>
<dbReference type="InterPro" id="IPR007120">
    <property type="entry name" value="DNA-dir_RNAP_su2_dom"/>
</dbReference>
<dbReference type="InterPro" id="IPR037033">
    <property type="entry name" value="DNA-dir_RNAP_su2_hyb_sf"/>
</dbReference>
<dbReference type="InterPro" id="IPR010243">
    <property type="entry name" value="RNA_pol_bsu_bac"/>
</dbReference>
<dbReference type="InterPro" id="IPR007121">
    <property type="entry name" value="RNA_pol_bsu_CS"/>
</dbReference>
<dbReference type="InterPro" id="IPR007644">
    <property type="entry name" value="RNA_pol_bsu_protrusion"/>
</dbReference>
<dbReference type="InterPro" id="IPR007642">
    <property type="entry name" value="RNA_pol_Rpb2_2"/>
</dbReference>
<dbReference type="InterPro" id="IPR037034">
    <property type="entry name" value="RNA_pol_Rpb2_2_sf"/>
</dbReference>
<dbReference type="InterPro" id="IPR007645">
    <property type="entry name" value="RNA_pol_Rpb2_3"/>
</dbReference>
<dbReference type="InterPro" id="IPR007641">
    <property type="entry name" value="RNA_pol_Rpb2_7"/>
</dbReference>
<dbReference type="InterPro" id="IPR014724">
    <property type="entry name" value="RNA_pol_RPB2_OB-fold"/>
</dbReference>
<dbReference type="NCBIfam" id="NF001616">
    <property type="entry name" value="PRK00405.1"/>
    <property type="match status" value="1"/>
</dbReference>
<dbReference type="NCBIfam" id="TIGR02013">
    <property type="entry name" value="rpoB"/>
    <property type="match status" value="1"/>
</dbReference>
<dbReference type="PANTHER" id="PTHR20856">
    <property type="entry name" value="DNA-DIRECTED RNA POLYMERASE I SUBUNIT 2"/>
    <property type="match status" value="1"/>
</dbReference>
<dbReference type="Pfam" id="PF04563">
    <property type="entry name" value="RNA_pol_Rpb2_1"/>
    <property type="match status" value="1"/>
</dbReference>
<dbReference type="Pfam" id="PF04561">
    <property type="entry name" value="RNA_pol_Rpb2_2"/>
    <property type="match status" value="1"/>
</dbReference>
<dbReference type="Pfam" id="PF04565">
    <property type="entry name" value="RNA_pol_Rpb2_3"/>
    <property type="match status" value="1"/>
</dbReference>
<dbReference type="Pfam" id="PF10385">
    <property type="entry name" value="RNA_pol_Rpb2_45"/>
    <property type="match status" value="1"/>
</dbReference>
<dbReference type="Pfam" id="PF00562">
    <property type="entry name" value="RNA_pol_Rpb2_6"/>
    <property type="match status" value="1"/>
</dbReference>
<dbReference type="Pfam" id="PF04560">
    <property type="entry name" value="RNA_pol_Rpb2_7"/>
    <property type="match status" value="1"/>
</dbReference>
<dbReference type="SUPFAM" id="SSF64484">
    <property type="entry name" value="beta and beta-prime subunits of DNA dependent RNA-polymerase"/>
    <property type="match status" value="1"/>
</dbReference>
<dbReference type="PROSITE" id="PS01166">
    <property type="entry name" value="RNA_POL_BETA"/>
    <property type="match status" value="1"/>
</dbReference>
<organism>
    <name type="scientific">Syntrophomonas wolfei subsp. wolfei (strain DSM 2245B / Goettingen)</name>
    <dbReference type="NCBI Taxonomy" id="335541"/>
    <lineage>
        <taxon>Bacteria</taxon>
        <taxon>Bacillati</taxon>
        <taxon>Bacillota</taxon>
        <taxon>Clostridia</taxon>
        <taxon>Eubacteriales</taxon>
        <taxon>Syntrophomonadaceae</taxon>
        <taxon>Syntrophomonas</taxon>
    </lineage>
</organism>
<comment type="function">
    <text evidence="1">DNA-dependent RNA polymerase catalyzes the transcription of DNA into RNA using the four ribonucleoside triphosphates as substrates.</text>
</comment>
<comment type="catalytic activity">
    <reaction evidence="1">
        <text>RNA(n) + a ribonucleoside 5'-triphosphate = RNA(n+1) + diphosphate</text>
        <dbReference type="Rhea" id="RHEA:21248"/>
        <dbReference type="Rhea" id="RHEA-COMP:14527"/>
        <dbReference type="Rhea" id="RHEA-COMP:17342"/>
        <dbReference type="ChEBI" id="CHEBI:33019"/>
        <dbReference type="ChEBI" id="CHEBI:61557"/>
        <dbReference type="ChEBI" id="CHEBI:140395"/>
        <dbReference type="EC" id="2.7.7.6"/>
    </reaction>
</comment>
<comment type="subunit">
    <text evidence="1">The RNAP catalytic core consists of 2 alpha, 1 beta, 1 beta' and 1 omega subunit. When a sigma factor is associated with the core the holoenzyme is formed, which can initiate transcription.</text>
</comment>
<comment type="similarity">
    <text evidence="1">Belongs to the RNA polymerase beta chain family.</text>
</comment>
<feature type="chain" id="PRO_0000300421" description="DNA-directed RNA polymerase subunit beta">
    <location>
        <begin position="1"/>
        <end position="1107"/>
    </location>
</feature>
<feature type="region of interest" description="Disordered" evidence="2">
    <location>
        <begin position="1062"/>
        <end position="1081"/>
    </location>
</feature>
<feature type="compositionally biased region" description="Basic and acidic residues" evidence="2">
    <location>
        <begin position="1062"/>
        <end position="1075"/>
    </location>
</feature>
<gene>
    <name evidence="1" type="primary">rpoB</name>
    <name type="ordered locus">Swol_2341</name>
</gene>
<protein>
    <recommendedName>
        <fullName evidence="1">DNA-directed RNA polymerase subunit beta</fullName>
        <shortName evidence="1">RNAP subunit beta</shortName>
        <ecNumber evidence="1">2.7.7.6</ecNumber>
    </recommendedName>
    <alternativeName>
        <fullName evidence="1">RNA polymerase subunit beta</fullName>
    </alternativeName>
    <alternativeName>
        <fullName evidence="1">Transcriptase subunit beta</fullName>
    </alternativeName>
</protein>
<reference key="1">
    <citation type="journal article" date="2010" name="Environ. Microbiol.">
        <title>The genome of Syntrophomonas wolfei: new insights into syntrophic metabolism and biohydrogen production.</title>
        <authorList>
            <person name="Sieber J.R."/>
            <person name="Sims D.R."/>
            <person name="Han C."/>
            <person name="Kim E."/>
            <person name="Lykidis A."/>
            <person name="Lapidus A.L."/>
            <person name="McDonnald E."/>
            <person name="Rohlin L."/>
            <person name="Culley D.E."/>
            <person name="Gunsalus R."/>
            <person name="McInerney M.J."/>
        </authorList>
    </citation>
    <scope>NUCLEOTIDE SEQUENCE [LARGE SCALE GENOMIC DNA]</scope>
    <source>
        <strain>DSM 2245B / Goettingen</strain>
    </source>
</reference>
<evidence type="ECO:0000255" key="1">
    <source>
        <dbReference type="HAMAP-Rule" id="MF_01321"/>
    </source>
</evidence>
<evidence type="ECO:0000256" key="2">
    <source>
        <dbReference type="SAM" id="MobiDB-lite"/>
    </source>
</evidence>
<name>RPOB_SYNWW</name>
<sequence length="1107" mass="124193">MAHLEQFGRVSRLSYSRIKEPVELPNLIQIQKNSYDWFLEHGLREALQEVFPISDFTGNLELGFLDYSMGEPKYSINECKERDVSYQAPLKLKVRLTDKENGEIKESEVYMGDLPLMTEKGTFIINGAERVVVSQLVKSPGVYFNERMDVAGHPLFGATIIPNRGAWFELEMDSAGLVYTRIDKTRKIPVTVLLRALGYESNEVILDMYDGDETIARTLEKDTSTNKKEALIEFYRRLRPGELATEDAAEQLLKNLFFDPRRYDMAAVGRYKVNKKLGLNIPPENRHLTLEDITATIGYLLKLIKGEGKTDVIDHLGNRRLRSIGELLQNQFRTGLVRMERVVRERMSIHDVETLTPQVLINIRPITAAVKEFFGSSQLSQFMDQTNPLAELTHKRRLSALGPGGLTRERAGFQVRDVHHSHYGRICPIETPEGPNIGLIGYLATFGQVNDFGFIETPYRKVDKKLGRVLNEIVYLSADEEDEYYVAQANAPLDENGYFIEEKVEARYFEEILEIPKNRVDYMDVSPKQVFSVATALIPFLENDDANRALMGANMQRQAVPLVKTEAPIVGTGLEHKAARDSGAVVIAKKAGTVKKASASRISIEKDDGTIDNYELLKFMRSNQGTCYNQRPIVKVGERVEANEVIADGPSTEQGELALGRNVMVAFMPWEGYNYEDAILISEKLVKDDVFTSIHIEEYECEARDTKLGSEEITRDIPNVSEDMLKNLDDQGVIRVGAEVRPDDILVGKVTPKGETELTPEERLLRAIFGEKAREVRDSSLRVPHGEAGKVVAVKRFSREKGDELPPGVNQLVRVYIAQKRKISEGDKMAGRHGNKGVISRILPEEDMPFLEDGTPVEIVLNPLGVPSRMNIGQILECHMGWAARALGLNIATPVFDGANEEDIFTKLREASLLESGKTILFDGRTGEKFKHEITVGYVYMLKLAHLVDDKIHARSIGPYSLVTQQPLGGKAQFGGQRFGEMEVWALEAYGSSYTLQEILTVKSDDVAGRLKTYESIVKGENIPEPGVPEGFKVLIKELQSLALDVRILAGDDHEILIKDNDNEGNEKEKARELGLDLPDNPVGRMLEITQPIENAEQDVELKSSPK</sequence>
<accession>Q0AUH2</accession>
<proteinExistence type="inferred from homology"/>
<keyword id="KW-0240">DNA-directed RNA polymerase</keyword>
<keyword id="KW-0548">Nucleotidyltransferase</keyword>
<keyword id="KW-1185">Reference proteome</keyword>
<keyword id="KW-0804">Transcription</keyword>
<keyword id="KW-0808">Transferase</keyword>